<comment type="function">
    <text evidence="1">Catalyzes the conversion of epoxyqueuosine (oQ) to queuosine (Q), which is a hypermodified base found in the wobble positions of tRNA(Asp), tRNA(Asn), tRNA(His) and tRNA(Tyr).</text>
</comment>
<comment type="catalytic activity">
    <reaction evidence="1">
        <text>epoxyqueuosine(34) in tRNA + AH2 = queuosine(34) in tRNA + A + H2O</text>
        <dbReference type="Rhea" id="RHEA:32159"/>
        <dbReference type="Rhea" id="RHEA-COMP:18571"/>
        <dbReference type="Rhea" id="RHEA-COMP:18582"/>
        <dbReference type="ChEBI" id="CHEBI:13193"/>
        <dbReference type="ChEBI" id="CHEBI:15377"/>
        <dbReference type="ChEBI" id="CHEBI:17499"/>
        <dbReference type="ChEBI" id="CHEBI:194431"/>
        <dbReference type="ChEBI" id="CHEBI:194443"/>
        <dbReference type="EC" id="1.17.99.6"/>
    </reaction>
</comment>
<comment type="cofactor">
    <cofactor evidence="1">
        <name>cob(II)alamin</name>
        <dbReference type="ChEBI" id="CHEBI:16304"/>
    </cofactor>
</comment>
<comment type="cofactor">
    <cofactor evidence="1">
        <name>[4Fe-4S] cluster</name>
        <dbReference type="ChEBI" id="CHEBI:49883"/>
    </cofactor>
    <text evidence="1">Binds 2 [4Fe-4S] clusters per monomer.</text>
</comment>
<comment type="pathway">
    <text evidence="1">tRNA modification; tRNA-queuosine biosynthesis.</text>
</comment>
<comment type="subunit">
    <text evidence="1">Monomer.</text>
</comment>
<comment type="subcellular location">
    <subcellularLocation>
        <location evidence="1">Cytoplasm</location>
    </subcellularLocation>
</comment>
<comment type="similarity">
    <text evidence="1">Belongs to the QueG family.</text>
</comment>
<reference key="1">
    <citation type="journal article" date="2005" name="Nucleic Acids Res.">
        <title>Genome dynamics and diversity of Shigella species, the etiologic agents of bacillary dysentery.</title>
        <authorList>
            <person name="Yang F."/>
            <person name="Yang J."/>
            <person name="Zhang X."/>
            <person name="Chen L."/>
            <person name="Jiang Y."/>
            <person name="Yan Y."/>
            <person name="Tang X."/>
            <person name="Wang J."/>
            <person name="Xiong Z."/>
            <person name="Dong J."/>
            <person name="Xue Y."/>
            <person name="Zhu Y."/>
            <person name="Xu X."/>
            <person name="Sun L."/>
            <person name="Chen S."/>
            <person name="Nie H."/>
            <person name="Peng J."/>
            <person name="Xu J."/>
            <person name="Wang Y."/>
            <person name="Yuan Z."/>
            <person name="Wen Y."/>
            <person name="Yao Z."/>
            <person name="Shen Y."/>
            <person name="Qiang B."/>
            <person name="Hou Y."/>
            <person name="Yu J."/>
            <person name="Jin Q."/>
        </authorList>
    </citation>
    <scope>NUCLEOTIDE SEQUENCE [LARGE SCALE GENOMIC DNA]</scope>
    <source>
        <strain>Sd197</strain>
    </source>
</reference>
<feature type="chain" id="PRO_0000416081" description="Epoxyqueuosine reductase">
    <location>
        <begin position="1"/>
        <end position="379"/>
    </location>
</feature>
<feature type="domain" description="4Fe-4S ferredoxin-type" evidence="1">
    <location>
        <begin position="181"/>
        <end position="213"/>
    </location>
</feature>
<feature type="active site" description="Proton donor" evidence="1">
    <location>
        <position position="139"/>
    </location>
</feature>
<feature type="binding site" evidence="1">
    <location>
        <position position="193"/>
    </location>
    <ligand>
        <name>[4Fe-4S] cluster</name>
        <dbReference type="ChEBI" id="CHEBI:49883"/>
        <label>1</label>
    </ligand>
</feature>
<feature type="binding site" evidence="1">
    <location>
        <position position="196"/>
    </location>
    <ligand>
        <name>[4Fe-4S] cluster</name>
        <dbReference type="ChEBI" id="CHEBI:49883"/>
        <label>1</label>
    </ligand>
</feature>
<feature type="binding site" evidence="1">
    <location>
        <position position="199"/>
    </location>
    <ligand>
        <name>[4Fe-4S] cluster</name>
        <dbReference type="ChEBI" id="CHEBI:49883"/>
        <label>1</label>
    </ligand>
</feature>
<feature type="binding site" evidence="1">
    <location>
        <position position="203"/>
    </location>
    <ligand>
        <name>[4Fe-4S] cluster</name>
        <dbReference type="ChEBI" id="CHEBI:49883"/>
        <label>2</label>
    </ligand>
</feature>
<feature type="binding site" evidence="1">
    <location>
        <position position="219"/>
    </location>
    <ligand>
        <name>[4Fe-4S] cluster</name>
        <dbReference type="ChEBI" id="CHEBI:49883"/>
        <label>2</label>
    </ligand>
</feature>
<feature type="binding site" evidence="1">
    <location>
        <position position="246"/>
    </location>
    <ligand>
        <name>[4Fe-4S] cluster</name>
        <dbReference type="ChEBI" id="CHEBI:49883"/>
        <label>2</label>
    </ligand>
</feature>
<feature type="binding site" evidence="1">
    <location>
        <position position="249"/>
    </location>
    <ligand>
        <name>[4Fe-4S] cluster</name>
        <dbReference type="ChEBI" id="CHEBI:49883"/>
        <label>2</label>
    </ligand>
</feature>
<feature type="binding site" evidence="1">
    <location>
        <position position="253"/>
    </location>
    <ligand>
        <name>[4Fe-4S] cluster</name>
        <dbReference type="ChEBI" id="CHEBI:49883"/>
        <label>1</label>
    </ligand>
</feature>
<proteinExistence type="inferred from homology"/>
<keyword id="KW-0004">4Fe-4S</keyword>
<keyword id="KW-0963">Cytoplasm</keyword>
<keyword id="KW-0408">Iron</keyword>
<keyword id="KW-0411">Iron-sulfur</keyword>
<keyword id="KW-0479">Metal-binding</keyword>
<keyword id="KW-0560">Oxidoreductase</keyword>
<keyword id="KW-0671">Queuosine biosynthesis</keyword>
<keyword id="KW-1185">Reference proteome</keyword>
<keyword id="KW-0819">tRNA processing</keyword>
<dbReference type="EC" id="1.17.99.6" evidence="1"/>
<dbReference type="EMBL" id="CP000034">
    <property type="protein sequence ID" value="ABB64312.1"/>
    <property type="molecule type" value="Genomic_DNA"/>
</dbReference>
<dbReference type="RefSeq" id="WP_001294194.1">
    <property type="nucleotide sequence ID" value="NC_007606.1"/>
</dbReference>
<dbReference type="RefSeq" id="YP_405803.1">
    <property type="nucleotide sequence ID" value="NC_007606.1"/>
</dbReference>
<dbReference type="SMR" id="Q328E3"/>
<dbReference type="STRING" id="300267.SDY_4425"/>
<dbReference type="EnsemblBacteria" id="ABB64312">
    <property type="protein sequence ID" value="ABB64312"/>
    <property type="gene ID" value="SDY_4425"/>
</dbReference>
<dbReference type="KEGG" id="sdy:SDY_4425"/>
<dbReference type="PATRIC" id="fig|300267.13.peg.5227"/>
<dbReference type="HOGENOM" id="CLU_030790_0_1_6"/>
<dbReference type="UniPathway" id="UPA00392"/>
<dbReference type="Proteomes" id="UP000002716">
    <property type="component" value="Chromosome"/>
</dbReference>
<dbReference type="GO" id="GO:0005737">
    <property type="term" value="C:cytoplasm"/>
    <property type="evidence" value="ECO:0007669"/>
    <property type="project" value="UniProtKB-SubCell"/>
</dbReference>
<dbReference type="GO" id="GO:0051539">
    <property type="term" value="F:4 iron, 4 sulfur cluster binding"/>
    <property type="evidence" value="ECO:0007669"/>
    <property type="project" value="UniProtKB-KW"/>
</dbReference>
<dbReference type="GO" id="GO:0052693">
    <property type="term" value="F:epoxyqueuosine reductase activity"/>
    <property type="evidence" value="ECO:0007669"/>
    <property type="project" value="UniProtKB-UniRule"/>
</dbReference>
<dbReference type="GO" id="GO:0046872">
    <property type="term" value="F:metal ion binding"/>
    <property type="evidence" value="ECO:0007669"/>
    <property type="project" value="UniProtKB-KW"/>
</dbReference>
<dbReference type="GO" id="GO:0008616">
    <property type="term" value="P:queuosine biosynthetic process"/>
    <property type="evidence" value="ECO:0007669"/>
    <property type="project" value="UniProtKB-UniRule"/>
</dbReference>
<dbReference type="GO" id="GO:0006400">
    <property type="term" value="P:tRNA modification"/>
    <property type="evidence" value="ECO:0007669"/>
    <property type="project" value="UniProtKB-UniRule"/>
</dbReference>
<dbReference type="FunFam" id="3.30.70.20:FF:000017">
    <property type="entry name" value="Epoxyqueuosine reductase"/>
    <property type="match status" value="1"/>
</dbReference>
<dbReference type="Gene3D" id="3.30.70.20">
    <property type="match status" value="1"/>
</dbReference>
<dbReference type="HAMAP" id="MF_00916">
    <property type="entry name" value="QueG"/>
    <property type="match status" value="1"/>
</dbReference>
<dbReference type="InterPro" id="IPR017896">
    <property type="entry name" value="4Fe4S_Fe-S-bd"/>
</dbReference>
<dbReference type="InterPro" id="IPR017900">
    <property type="entry name" value="4Fe4S_Fe_S_CS"/>
</dbReference>
<dbReference type="InterPro" id="IPR004453">
    <property type="entry name" value="QueG"/>
</dbReference>
<dbReference type="InterPro" id="IPR013542">
    <property type="entry name" value="QueG_DUF1730"/>
</dbReference>
<dbReference type="NCBIfam" id="TIGR00276">
    <property type="entry name" value="tRNA epoxyqueuosine(34) reductase QueG"/>
    <property type="match status" value="1"/>
</dbReference>
<dbReference type="PANTHER" id="PTHR30002">
    <property type="entry name" value="EPOXYQUEUOSINE REDUCTASE"/>
    <property type="match status" value="1"/>
</dbReference>
<dbReference type="PANTHER" id="PTHR30002:SF4">
    <property type="entry name" value="EPOXYQUEUOSINE REDUCTASE"/>
    <property type="match status" value="1"/>
</dbReference>
<dbReference type="Pfam" id="PF13484">
    <property type="entry name" value="Fer4_16"/>
    <property type="match status" value="1"/>
</dbReference>
<dbReference type="Pfam" id="PF08331">
    <property type="entry name" value="QueG_DUF1730"/>
    <property type="match status" value="1"/>
</dbReference>
<dbReference type="SUPFAM" id="SSF46548">
    <property type="entry name" value="alpha-helical ferredoxin"/>
    <property type="match status" value="1"/>
</dbReference>
<dbReference type="PROSITE" id="PS00198">
    <property type="entry name" value="4FE4S_FER_1"/>
    <property type="match status" value="1"/>
</dbReference>
<dbReference type="PROSITE" id="PS51379">
    <property type="entry name" value="4FE4S_FER_2"/>
    <property type="match status" value="1"/>
</dbReference>
<protein>
    <recommendedName>
        <fullName evidence="1">Epoxyqueuosine reductase</fullName>
        <ecNumber evidence="1">1.17.99.6</ecNumber>
    </recommendedName>
    <alternativeName>
        <fullName evidence="1">Queuosine biosynthesis protein QueG</fullName>
    </alternativeName>
</protein>
<name>QUEG_SHIDS</name>
<gene>
    <name evidence="1" type="primary">queG</name>
    <name type="ordered locus">SDY_4425</name>
</gene>
<organism>
    <name type="scientific">Shigella dysenteriae serotype 1 (strain Sd197)</name>
    <dbReference type="NCBI Taxonomy" id="300267"/>
    <lineage>
        <taxon>Bacteria</taxon>
        <taxon>Pseudomonadati</taxon>
        <taxon>Pseudomonadota</taxon>
        <taxon>Gammaproteobacteria</taxon>
        <taxon>Enterobacterales</taxon>
        <taxon>Enterobacteriaceae</taxon>
        <taxon>Shigella</taxon>
    </lineage>
</organism>
<accession>Q328E3</accession>
<evidence type="ECO:0000255" key="1">
    <source>
        <dbReference type="HAMAP-Rule" id="MF_00916"/>
    </source>
</evidence>
<sequence length="379" mass="43038">MSEPLDLNQLAHKIKQWGLELGFQQVGITDTDLSESEPKLQAWLDKQYHGEMDWMARHGMLRARPHELLPGTLRVISVRMNYLPANAAFASTLKNPKLGYVSRYALGRDYHKLLRNRLKKLGEMIQQHCVSLNFRPFVDSAPILERPLAEKAGLGWTGKHSLILNREAGSFFFLGELLVDIPLPVDQPVEEGCGKCVACMTICPTGAIVEPYTVDARRCISYLTIELEGAIPEELRPLMGNRIYGCDDCQLICPWNRYSQLTTEDDFSPRKPLHAPELIELFAWSEEKFLKVTEGSAIRRIGHLRWLRNIAVALGNAPWDETILAALESRKGEHPLLDEHIAWAIAQQIERRNACIVEVQLPKKQRLVRVIEKGLPRDA</sequence>